<accession>A5E8P0</accession>
<evidence type="ECO:0000255" key="1">
    <source>
        <dbReference type="HAMAP-Rule" id="MF_00581"/>
    </source>
</evidence>
<proteinExistence type="inferred from homology"/>
<reference key="1">
    <citation type="journal article" date="2007" name="Science">
        <title>Legumes symbioses: absence of nod genes in photosynthetic bradyrhizobia.</title>
        <authorList>
            <person name="Giraud E."/>
            <person name="Moulin L."/>
            <person name="Vallenet D."/>
            <person name="Barbe V."/>
            <person name="Cytryn E."/>
            <person name="Avarre J.-C."/>
            <person name="Jaubert M."/>
            <person name="Simon D."/>
            <person name="Cartieaux F."/>
            <person name="Prin Y."/>
            <person name="Bena G."/>
            <person name="Hannibal L."/>
            <person name="Fardoux J."/>
            <person name="Kojadinovic M."/>
            <person name="Vuillet L."/>
            <person name="Lajus A."/>
            <person name="Cruveiller S."/>
            <person name="Rouy Z."/>
            <person name="Mangenot S."/>
            <person name="Segurens B."/>
            <person name="Dossat C."/>
            <person name="Franck W.L."/>
            <person name="Chang W.-S."/>
            <person name="Saunders E."/>
            <person name="Bruce D."/>
            <person name="Richardson P."/>
            <person name="Normand P."/>
            <person name="Dreyfus B."/>
            <person name="Pignol D."/>
            <person name="Stacey G."/>
            <person name="Emerich D."/>
            <person name="Vermeglio A."/>
            <person name="Medigue C."/>
            <person name="Sadowsky M."/>
        </authorList>
    </citation>
    <scope>NUCLEOTIDE SEQUENCE [LARGE SCALE GENOMIC DNA]</scope>
    <source>
        <strain>BTAi1 / ATCC BAA-1182</strain>
    </source>
</reference>
<protein>
    <recommendedName>
        <fullName evidence="1">Argininosuccinate synthase</fullName>
        <ecNumber evidence="1">6.3.4.5</ecNumber>
    </recommendedName>
    <alternativeName>
        <fullName evidence="1">Citrulline--aspartate ligase</fullName>
    </alternativeName>
</protein>
<name>ASSY_BRASB</name>
<gene>
    <name evidence="1" type="primary">argG</name>
    <name type="ordered locus">BBta_0238</name>
</gene>
<feature type="chain" id="PRO_1000129734" description="Argininosuccinate synthase">
    <location>
        <begin position="1"/>
        <end position="445"/>
    </location>
</feature>
<feature type="binding site" evidence="1">
    <location>
        <begin position="17"/>
        <end position="25"/>
    </location>
    <ligand>
        <name>ATP</name>
        <dbReference type="ChEBI" id="CHEBI:30616"/>
    </ligand>
</feature>
<feature type="binding site" evidence="1">
    <location>
        <position position="43"/>
    </location>
    <ligand>
        <name>ATP</name>
        <dbReference type="ChEBI" id="CHEBI:30616"/>
    </ligand>
</feature>
<feature type="binding site" evidence="1">
    <location>
        <position position="99"/>
    </location>
    <ligand>
        <name>L-citrulline</name>
        <dbReference type="ChEBI" id="CHEBI:57743"/>
    </ligand>
</feature>
<feature type="binding site" evidence="1">
    <location>
        <position position="129"/>
    </location>
    <ligand>
        <name>ATP</name>
        <dbReference type="ChEBI" id="CHEBI:30616"/>
    </ligand>
</feature>
<feature type="binding site" evidence="1">
    <location>
        <position position="131"/>
    </location>
    <ligand>
        <name>ATP</name>
        <dbReference type="ChEBI" id="CHEBI:30616"/>
    </ligand>
</feature>
<feature type="binding site" evidence="1">
    <location>
        <position position="131"/>
    </location>
    <ligand>
        <name>L-aspartate</name>
        <dbReference type="ChEBI" id="CHEBI:29991"/>
    </ligand>
</feature>
<feature type="binding site" evidence="1">
    <location>
        <position position="135"/>
    </location>
    <ligand>
        <name>L-aspartate</name>
        <dbReference type="ChEBI" id="CHEBI:29991"/>
    </ligand>
</feature>
<feature type="binding site" evidence="1">
    <location>
        <position position="135"/>
    </location>
    <ligand>
        <name>L-citrulline</name>
        <dbReference type="ChEBI" id="CHEBI:57743"/>
    </ligand>
</feature>
<feature type="binding site" evidence="1">
    <location>
        <position position="136"/>
    </location>
    <ligand>
        <name>ATP</name>
        <dbReference type="ChEBI" id="CHEBI:30616"/>
    </ligand>
</feature>
<feature type="binding site" evidence="1">
    <location>
        <position position="136"/>
    </location>
    <ligand>
        <name>L-aspartate</name>
        <dbReference type="ChEBI" id="CHEBI:29991"/>
    </ligand>
</feature>
<feature type="binding site" evidence="1">
    <location>
        <position position="139"/>
    </location>
    <ligand>
        <name>L-citrulline</name>
        <dbReference type="ChEBI" id="CHEBI:57743"/>
    </ligand>
</feature>
<feature type="binding site" evidence="1">
    <location>
        <position position="192"/>
    </location>
    <ligand>
        <name>L-citrulline</name>
        <dbReference type="ChEBI" id="CHEBI:57743"/>
    </ligand>
</feature>
<feature type="binding site" evidence="1">
    <location>
        <position position="194"/>
    </location>
    <ligand>
        <name>ATP</name>
        <dbReference type="ChEBI" id="CHEBI:30616"/>
    </ligand>
</feature>
<feature type="binding site" evidence="1">
    <location>
        <position position="201"/>
    </location>
    <ligand>
        <name>L-citrulline</name>
        <dbReference type="ChEBI" id="CHEBI:57743"/>
    </ligand>
</feature>
<feature type="binding site" evidence="1">
    <location>
        <position position="203"/>
    </location>
    <ligand>
        <name>L-citrulline</name>
        <dbReference type="ChEBI" id="CHEBI:57743"/>
    </ligand>
</feature>
<feature type="binding site" evidence="1">
    <location>
        <position position="280"/>
    </location>
    <ligand>
        <name>L-citrulline</name>
        <dbReference type="ChEBI" id="CHEBI:57743"/>
    </ligand>
</feature>
<organism>
    <name type="scientific">Bradyrhizobium sp. (strain BTAi1 / ATCC BAA-1182)</name>
    <dbReference type="NCBI Taxonomy" id="288000"/>
    <lineage>
        <taxon>Bacteria</taxon>
        <taxon>Pseudomonadati</taxon>
        <taxon>Pseudomonadota</taxon>
        <taxon>Alphaproteobacteria</taxon>
        <taxon>Hyphomicrobiales</taxon>
        <taxon>Nitrobacteraceae</taxon>
        <taxon>Bradyrhizobium</taxon>
    </lineage>
</organism>
<keyword id="KW-0028">Amino-acid biosynthesis</keyword>
<keyword id="KW-0055">Arginine biosynthesis</keyword>
<keyword id="KW-0067">ATP-binding</keyword>
<keyword id="KW-0963">Cytoplasm</keyword>
<keyword id="KW-0436">Ligase</keyword>
<keyword id="KW-0547">Nucleotide-binding</keyword>
<keyword id="KW-1185">Reference proteome</keyword>
<dbReference type="EC" id="6.3.4.5" evidence="1"/>
<dbReference type="EMBL" id="CP000494">
    <property type="protein sequence ID" value="ABQ32534.1"/>
    <property type="molecule type" value="Genomic_DNA"/>
</dbReference>
<dbReference type="RefSeq" id="WP_012040591.1">
    <property type="nucleotide sequence ID" value="NC_009485.1"/>
</dbReference>
<dbReference type="SMR" id="A5E8P0"/>
<dbReference type="STRING" id="288000.BBta_0238"/>
<dbReference type="KEGG" id="bbt:BBta_0238"/>
<dbReference type="eggNOG" id="COG0137">
    <property type="taxonomic scope" value="Bacteria"/>
</dbReference>
<dbReference type="HOGENOM" id="CLU_032784_4_1_5"/>
<dbReference type="OrthoDB" id="9801641at2"/>
<dbReference type="UniPathway" id="UPA00068">
    <property type="reaction ID" value="UER00113"/>
</dbReference>
<dbReference type="Proteomes" id="UP000000246">
    <property type="component" value="Chromosome"/>
</dbReference>
<dbReference type="GO" id="GO:0005737">
    <property type="term" value="C:cytoplasm"/>
    <property type="evidence" value="ECO:0007669"/>
    <property type="project" value="UniProtKB-SubCell"/>
</dbReference>
<dbReference type="GO" id="GO:0004055">
    <property type="term" value="F:argininosuccinate synthase activity"/>
    <property type="evidence" value="ECO:0007669"/>
    <property type="project" value="UniProtKB-UniRule"/>
</dbReference>
<dbReference type="GO" id="GO:0005524">
    <property type="term" value="F:ATP binding"/>
    <property type="evidence" value="ECO:0007669"/>
    <property type="project" value="UniProtKB-UniRule"/>
</dbReference>
<dbReference type="GO" id="GO:0042803">
    <property type="term" value="F:protein homodimerization activity"/>
    <property type="evidence" value="ECO:0007669"/>
    <property type="project" value="InterPro"/>
</dbReference>
<dbReference type="GO" id="GO:0000053">
    <property type="term" value="P:argininosuccinate metabolic process"/>
    <property type="evidence" value="ECO:0007669"/>
    <property type="project" value="TreeGrafter"/>
</dbReference>
<dbReference type="GO" id="GO:0006526">
    <property type="term" value="P:L-arginine biosynthetic process"/>
    <property type="evidence" value="ECO:0007669"/>
    <property type="project" value="UniProtKB-UniRule"/>
</dbReference>
<dbReference type="GO" id="GO:0000050">
    <property type="term" value="P:urea cycle"/>
    <property type="evidence" value="ECO:0007669"/>
    <property type="project" value="TreeGrafter"/>
</dbReference>
<dbReference type="CDD" id="cd01999">
    <property type="entry name" value="ASS"/>
    <property type="match status" value="1"/>
</dbReference>
<dbReference type="FunFam" id="1.10.287.400:FF:000001">
    <property type="entry name" value="Argininosuccinate synthase"/>
    <property type="match status" value="1"/>
</dbReference>
<dbReference type="Gene3D" id="1.10.287.400">
    <property type="match status" value="1"/>
</dbReference>
<dbReference type="Gene3D" id="3.90.1260.10">
    <property type="entry name" value="Argininosuccinate synthetase, chain A, domain 2"/>
    <property type="match status" value="1"/>
</dbReference>
<dbReference type="Gene3D" id="3.40.50.620">
    <property type="entry name" value="HUPs"/>
    <property type="match status" value="1"/>
</dbReference>
<dbReference type="HAMAP" id="MF_00581">
    <property type="entry name" value="Arg_succ_synth_type2"/>
    <property type="match status" value="1"/>
</dbReference>
<dbReference type="InterPro" id="IPR023437">
    <property type="entry name" value="Arg_succ_synth_type2_subfam"/>
</dbReference>
<dbReference type="InterPro" id="IPR048268">
    <property type="entry name" value="Arginosuc_syn_C"/>
</dbReference>
<dbReference type="InterPro" id="IPR048267">
    <property type="entry name" value="Arginosuc_syn_N"/>
</dbReference>
<dbReference type="InterPro" id="IPR001518">
    <property type="entry name" value="Arginosuc_synth"/>
</dbReference>
<dbReference type="InterPro" id="IPR018223">
    <property type="entry name" value="Arginosuc_synth_CS"/>
</dbReference>
<dbReference type="InterPro" id="IPR023434">
    <property type="entry name" value="Arginosuc_synth_type_1_subfam"/>
</dbReference>
<dbReference type="InterPro" id="IPR024074">
    <property type="entry name" value="AS_cat/multimer_dom_body"/>
</dbReference>
<dbReference type="InterPro" id="IPR024073">
    <property type="entry name" value="AS_multimer_C_tail"/>
</dbReference>
<dbReference type="InterPro" id="IPR014729">
    <property type="entry name" value="Rossmann-like_a/b/a_fold"/>
</dbReference>
<dbReference type="NCBIfam" id="TIGR00032">
    <property type="entry name" value="argG"/>
    <property type="match status" value="1"/>
</dbReference>
<dbReference type="NCBIfam" id="NF003779">
    <property type="entry name" value="PRK05370.1"/>
    <property type="match status" value="1"/>
</dbReference>
<dbReference type="PANTHER" id="PTHR11587">
    <property type="entry name" value="ARGININOSUCCINATE SYNTHASE"/>
    <property type="match status" value="1"/>
</dbReference>
<dbReference type="PANTHER" id="PTHR11587:SF2">
    <property type="entry name" value="ARGININOSUCCINATE SYNTHASE"/>
    <property type="match status" value="1"/>
</dbReference>
<dbReference type="Pfam" id="PF20979">
    <property type="entry name" value="Arginosuc_syn_C"/>
    <property type="match status" value="1"/>
</dbReference>
<dbReference type="Pfam" id="PF00764">
    <property type="entry name" value="Arginosuc_synth"/>
    <property type="match status" value="1"/>
</dbReference>
<dbReference type="SUPFAM" id="SSF52402">
    <property type="entry name" value="Adenine nucleotide alpha hydrolases-like"/>
    <property type="match status" value="1"/>
</dbReference>
<dbReference type="SUPFAM" id="SSF69864">
    <property type="entry name" value="Argininosuccinate synthetase, C-terminal domain"/>
    <property type="match status" value="1"/>
</dbReference>
<dbReference type="PROSITE" id="PS00564">
    <property type="entry name" value="ARGININOSUCCIN_SYN_1"/>
    <property type="match status" value="1"/>
</dbReference>
<dbReference type="PROSITE" id="PS00565">
    <property type="entry name" value="ARGININOSUCCIN_SYN_2"/>
    <property type="match status" value="1"/>
</dbReference>
<sequence length="445" mass="49233">MTTILKGLPKGEKVGIAFSGGLDTSAALLWMKQKGARCFAYTANLGQPDESDYDEIPRKAMSFGAEKARLVDCRTQLVHEGIAAIQSGAFHISTGGATYFNTTPLGRAVTGTMLVAAMKEDGVNIWGDGSTYKGNDIERFYRYGLLTNPNLKIYKPWLDQQFIDELGGRAEMSAFLTANGFDYKMSAEKAYSTDSNLLGATHEAKDLENLNSGIRIVNPIMGVPFWREDCVVKPETVVVRFEEGQPVALNGQTFTDPVALFLEANAIGGRHGLGMCDQIENRIIEAKSRGIYEAPGMALLHIAYERLLTGIHNEDTIEQYRINGLRLGRLLYQGRWFDSQALMLRETAQRWVASAITGEVTLELRRGNDYSLLNTESPNLTYQPERLSMEKVEDAAFTPADRIGQLTMRNLDITDTRTKLKLYSETGLLTGSEGAQIFQLGHDKG</sequence>
<comment type="catalytic activity">
    <reaction evidence="1">
        <text>L-citrulline + L-aspartate + ATP = 2-(N(omega)-L-arginino)succinate + AMP + diphosphate + H(+)</text>
        <dbReference type="Rhea" id="RHEA:10932"/>
        <dbReference type="ChEBI" id="CHEBI:15378"/>
        <dbReference type="ChEBI" id="CHEBI:29991"/>
        <dbReference type="ChEBI" id="CHEBI:30616"/>
        <dbReference type="ChEBI" id="CHEBI:33019"/>
        <dbReference type="ChEBI" id="CHEBI:57472"/>
        <dbReference type="ChEBI" id="CHEBI:57743"/>
        <dbReference type="ChEBI" id="CHEBI:456215"/>
        <dbReference type="EC" id="6.3.4.5"/>
    </reaction>
</comment>
<comment type="pathway">
    <text evidence="1">Amino-acid biosynthesis; L-arginine biosynthesis; L-arginine from L-ornithine and carbamoyl phosphate: step 2/3.</text>
</comment>
<comment type="subunit">
    <text evidence="1">Homotetramer.</text>
</comment>
<comment type="subcellular location">
    <subcellularLocation>
        <location evidence="1">Cytoplasm</location>
    </subcellularLocation>
</comment>
<comment type="similarity">
    <text evidence="1">Belongs to the argininosuccinate synthase family. Type 2 subfamily.</text>
</comment>